<keyword id="KW-1003">Cell membrane</keyword>
<keyword id="KW-0444">Lipid biosynthesis</keyword>
<keyword id="KW-0443">Lipid metabolism</keyword>
<keyword id="KW-0472">Membrane</keyword>
<keyword id="KW-0594">Phospholipid biosynthesis</keyword>
<keyword id="KW-1208">Phospholipid metabolism</keyword>
<keyword id="KW-0808">Transferase</keyword>
<keyword id="KW-0812">Transmembrane</keyword>
<keyword id="KW-1133">Transmembrane helix</keyword>
<proteinExistence type="inferred from homology"/>
<dbReference type="EC" id="2.3.1.275" evidence="1"/>
<dbReference type="EMBL" id="AM999887">
    <property type="protein sequence ID" value="CAQ55218.1"/>
    <property type="molecule type" value="Genomic_DNA"/>
</dbReference>
<dbReference type="RefSeq" id="WP_007302484.1">
    <property type="nucleotide sequence ID" value="NC_010981.1"/>
</dbReference>
<dbReference type="SMR" id="B3CMU6"/>
<dbReference type="KEGG" id="wpi:WP1110"/>
<dbReference type="eggNOG" id="COG0344">
    <property type="taxonomic scope" value="Bacteria"/>
</dbReference>
<dbReference type="HOGENOM" id="CLU_081254_7_1_5"/>
<dbReference type="UniPathway" id="UPA00085"/>
<dbReference type="Proteomes" id="UP000008814">
    <property type="component" value="Chromosome"/>
</dbReference>
<dbReference type="GO" id="GO:0005886">
    <property type="term" value="C:plasma membrane"/>
    <property type="evidence" value="ECO:0007669"/>
    <property type="project" value="UniProtKB-SubCell"/>
</dbReference>
<dbReference type="GO" id="GO:0043772">
    <property type="term" value="F:acyl-phosphate glycerol-3-phosphate acyltransferase activity"/>
    <property type="evidence" value="ECO:0007669"/>
    <property type="project" value="UniProtKB-UniRule"/>
</dbReference>
<dbReference type="GO" id="GO:0008654">
    <property type="term" value="P:phospholipid biosynthetic process"/>
    <property type="evidence" value="ECO:0007669"/>
    <property type="project" value="UniProtKB-UniRule"/>
</dbReference>
<dbReference type="HAMAP" id="MF_01043">
    <property type="entry name" value="PlsY"/>
    <property type="match status" value="1"/>
</dbReference>
<dbReference type="InterPro" id="IPR003811">
    <property type="entry name" value="G3P_acylTferase_PlsY"/>
</dbReference>
<dbReference type="NCBIfam" id="TIGR00023">
    <property type="entry name" value="glycerol-3-phosphate 1-O-acyltransferase PlsY"/>
    <property type="match status" value="1"/>
</dbReference>
<dbReference type="PANTHER" id="PTHR30309:SF0">
    <property type="entry name" value="GLYCEROL-3-PHOSPHATE ACYLTRANSFERASE-RELATED"/>
    <property type="match status" value="1"/>
</dbReference>
<dbReference type="PANTHER" id="PTHR30309">
    <property type="entry name" value="INNER MEMBRANE PROTEIN YGIH"/>
    <property type="match status" value="1"/>
</dbReference>
<dbReference type="Pfam" id="PF02660">
    <property type="entry name" value="G3P_acyltransf"/>
    <property type="match status" value="1"/>
</dbReference>
<dbReference type="SMART" id="SM01207">
    <property type="entry name" value="G3P_acyltransf"/>
    <property type="match status" value="1"/>
</dbReference>
<organism>
    <name type="scientific">Wolbachia pipientis subsp. Culex pipiens (strain wPip)</name>
    <dbReference type="NCBI Taxonomy" id="570417"/>
    <lineage>
        <taxon>Bacteria</taxon>
        <taxon>Pseudomonadati</taxon>
        <taxon>Pseudomonadota</taxon>
        <taxon>Alphaproteobacteria</taxon>
        <taxon>Rickettsiales</taxon>
        <taxon>Anaplasmataceae</taxon>
        <taxon>Wolbachieae</taxon>
        <taxon>Wolbachia</taxon>
    </lineage>
</organism>
<name>PLSY_WOLPP</name>
<comment type="function">
    <text evidence="1">Catalyzes the transfer of an acyl group from acyl-phosphate (acyl-PO(4)) to glycerol-3-phosphate (G3P) to form lysophosphatidic acid (LPA). This enzyme utilizes acyl-phosphate as fatty acyl donor, but not acyl-CoA or acyl-ACP.</text>
</comment>
<comment type="catalytic activity">
    <reaction evidence="1">
        <text>an acyl phosphate + sn-glycerol 3-phosphate = a 1-acyl-sn-glycero-3-phosphate + phosphate</text>
        <dbReference type="Rhea" id="RHEA:34075"/>
        <dbReference type="ChEBI" id="CHEBI:43474"/>
        <dbReference type="ChEBI" id="CHEBI:57597"/>
        <dbReference type="ChEBI" id="CHEBI:57970"/>
        <dbReference type="ChEBI" id="CHEBI:59918"/>
        <dbReference type="EC" id="2.3.1.275"/>
    </reaction>
</comment>
<comment type="pathway">
    <text evidence="1">Lipid metabolism; phospholipid metabolism.</text>
</comment>
<comment type="subunit">
    <text evidence="1">Probably interacts with PlsX.</text>
</comment>
<comment type="subcellular location">
    <subcellularLocation>
        <location evidence="1">Cell membrane</location>
        <topology evidence="1">Multi-pass membrane protein</topology>
    </subcellularLocation>
</comment>
<comment type="similarity">
    <text evidence="1">Belongs to the PlsY family.</text>
</comment>
<feature type="chain" id="PRO_1000136133" description="Glycerol-3-phosphate acyltransferase">
    <location>
        <begin position="1"/>
        <end position="191"/>
    </location>
</feature>
<feature type="transmembrane region" description="Helical" evidence="1">
    <location>
        <begin position="5"/>
        <end position="25"/>
    </location>
</feature>
<feature type="transmembrane region" description="Helical" evidence="1">
    <location>
        <begin position="51"/>
        <end position="71"/>
    </location>
</feature>
<feature type="transmembrane region" description="Helical" evidence="1">
    <location>
        <begin position="78"/>
        <end position="98"/>
    </location>
</feature>
<feature type="transmembrane region" description="Helical" evidence="1">
    <location>
        <begin position="114"/>
        <end position="134"/>
    </location>
</feature>
<feature type="transmembrane region" description="Helical" evidence="1">
    <location>
        <begin position="153"/>
        <end position="173"/>
    </location>
</feature>
<accession>B3CMU6</accession>
<protein>
    <recommendedName>
        <fullName evidence="1">Glycerol-3-phosphate acyltransferase</fullName>
    </recommendedName>
    <alternativeName>
        <fullName evidence="1">Acyl-PO4 G3P acyltransferase</fullName>
    </alternativeName>
    <alternativeName>
        <fullName evidence="1">Acyl-phosphate--glycerol-3-phosphate acyltransferase</fullName>
    </alternativeName>
    <alternativeName>
        <fullName evidence="1">G3P acyltransferase</fullName>
        <shortName evidence="1">GPAT</shortName>
        <ecNumber evidence="1">2.3.1.275</ecNumber>
    </alternativeName>
    <alternativeName>
        <fullName evidence="1">Lysophosphatidic acid synthase</fullName>
        <shortName evidence="1">LPA synthase</shortName>
    </alternativeName>
</protein>
<sequence>MEKYIILILSYVIGSIPFSLIIAKINGINLREVGSGNIGATNVARTGNKRLAVLALFLDSLKGFVAVYTAQQFCDNNDLYIYVSAILAVLGHMFPIWLRFNGGKGVATTLGVLIALNISIALAFVFVWLIVFFIFRYSSLASLAATAAAVIASFFFQKELFLILLTVAILIFLKHYKNIANLLQGRERKFL</sequence>
<gene>
    <name evidence="1" type="primary">plsY</name>
    <name type="ordered locus">WP1110</name>
</gene>
<evidence type="ECO:0000255" key="1">
    <source>
        <dbReference type="HAMAP-Rule" id="MF_01043"/>
    </source>
</evidence>
<reference key="1">
    <citation type="journal article" date="2008" name="Mol. Biol. Evol.">
        <title>Genome evolution of Wolbachia strain wPip from the Culex pipiens group.</title>
        <authorList>
            <person name="Klasson L."/>
            <person name="Walker T."/>
            <person name="Sebaihia M."/>
            <person name="Sanders M.J."/>
            <person name="Quail M.A."/>
            <person name="Lord A."/>
            <person name="Sanders S."/>
            <person name="Earl J."/>
            <person name="O'Neill S.L."/>
            <person name="Thomson N."/>
            <person name="Sinkins S.P."/>
            <person name="Parkhill J."/>
        </authorList>
    </citation>
    <scope>NUCLEOTIDE SEQUENCE [LARGE SCALE GENOMIC DNA]</scope>
    <source>
        <strain>wPip</strain>
    </source>
</reference>